<keyword id="KW-0256">Endoplasmic reticulum</keyword>
<keyword id="KW-0275">Fatty acid biosynthesis</keyword>
<keyword id="KW-0276">Fatty acid metabolism</keyword>
<keyword id="KW-0444">Lipid biosynthesis</keyword>
<keyword id="KW-0443">Lipid metabolism</keyword>
<keyword id="KW-0472">Membrane</keyword>
<keyword id="KW-1185">Reference proteome</keyword>
<keyword id="KW-0808">Transferase</keyword>
<keyword id="KW-0812">Transmembrane</keyword>
<keyword id="KW-1133">Transmembrane helix</keyword>
<evidence type="ECO:0000250" key="1">
    <source>
        <dbReference type="UniProtKB" id="P40319"/>
    </source>
</evidence>
<evidence type="ECO:0000255" key="2"/>
<evidence type="ECO:0000269" key="3">
    <source>
    </source>
</evidence>
<evidence type="ECO:0000269" key="4">
    <source>
    </source>
</evidence>
<evidence type="ECO:0000269" key="5">
    <source>
    </source>
</evidence>
<evidence type="ECO:0000269" key="6">
    <source>
    </source>
</evidence>
<evidence type="ECO:0000269" key="7">
    <source>
    </source>
</evidence>
<evidence type="ECO:0000269" key="8">
    <source>
    </source>
</evidence>
<evidence type="ECO:0000269" key="9">
    <source>
    </source>
</evidence>
<evidence type="ECO:0000303" key="10">
    <source>
    </source>
</evidence>
<evidence type="ECO:0000305" key="11"/>
<evidence type="ECO:0000305" key="12">
    <source>
    </source>
</evidence>
<evidence type="ECO:0000312" key="13">
    <source>
        <dbReference type="SGD" id="S000003732"/>
    </source>
</evidence>
<name>ELO1_YEAST</name>
<sequence length="310" mass="36234">MVSDWKNFCLEKASRFRPTIDRPFFNIYLWDYFNRAVGWATAGRFQPKDFEFTVGKQPLSEPRPVLLFIAMYYVVIFGGRSLVKSCKPLKLRFISQVHNLMLTSVSFLWLILMVEQMLPIVYRHGLYFAVCNVESWTQPMETLYYLNYMTKFVEFADTVLMVLKHRKLTFLHTYHHGATALLCYNQLVGYTAVTWVPVTLNLAVHVLMYWYYFLSASGIRVWWKAWVTRLQIVQFMLDLIVVYYVLYQKIVAAYFKNACTPQCEDCLGSMTAIAAGAAILTSYLFLFISFYIEVYKRGSASGKKKINKNN</sequence>
<reference key="1">
    <citation type="journal article" date="1996" name="J. Biol. Chem.">
        <title>Isolation and characterization of a gene affecting fatty acid elongation in Saccharomyces cerevisiae.</title>
        <authorList>
            <person name="Toke D.A."/>
            <person name="Martin C.E."/>
        </authorList>
    </citation>
    <scope>NUCLEOTIDE SEQUENCE [GENOMIC DNA]</scope>
    <scope>FUNCTION</scope>
    <scope>CATALYTIC ACTIVITY</scope>
</reference>
<reference key="2">
    <citation type="journal article" date="1994" name="Yeast">
        <title>The sequence of a 36 kb segment on the left arm of yeast chromosome X identifies 24 open reading frames including NUC1, PRP21 (SPP91), CDC6, CRY2, the gene for S24, a homologue to the aconitase gene ACO1 and two homologues to chromosome III genes.</title>
        <authorList>
            <person name="Purnelle B."/>
            <person name="Coster F."/>
            <person name="Goffeau A."/>
        </authorList>
    </citation>
    <scope>NUCLEOTIDE SEQUENCE [GENOMIC DNA]</scope>
    <source>
        <strain>ATCC 204508 / S288c</strain>
    </source>
</reference>
<reference key="3">
    <citation type="journal article" date="1996" name="EMBO J.">
        <title>Complete nucleotide sequence of Saccharomyces cerevisiae chromosome X.</title>
        <authorList>
            <person name="Galibert F."/>
            <person name="Alexandraki D."/>
            <person name="Baur A."/>
            <person name="Boles E."/>
            <person name="Chalwatzis N."/>
            <person name="Chuat J.-C."/>
            <person name="Coster F."/>
            <person name="Cziepluch C."/>
            <person name="de Haan M."/>
            <person name="Domdey H."/>
            <person name="Durand P."/>
            <person name="Entian K.-D."/>
            <person name="Gatius M."/>
            <person name="Goffeau A."/>
            <person name="Grivell L.A."/>
            <person name="Hennemann A."/>
            <person name="Herbert C.J."/>
            <person name="Heumann K."/>
            <person name="Hilger F."/>
            <person name="Hollenberg C.P."/>
            <person name="Huang M.-E."/>
            <person name="Jacq C."/>
            <person name="Jauniaux J.-C."/>
            <person name="Katsoulou C."/>
            <person name="Kirchrath L."/>
            <person name="Kleine K."/>
            <person name="Kordes E."/>
            <person name="Koetter P."/>
            <person name="Liebl S."/>
            <person name="Louis E.J."/>
            <person name="Manus V."/>
            <person name="Mewes H.-W."/>
            <person name="Miosga T."/>
            <person name="Obermaier B."/>
            <person name="Perea J."/>
            <person name="Pohl T.M."/>
            <person name="Portetelle D."/>
            <person name="Pujol A."/>
            <person name="Purnelle B."/>
            <person name="Ramezani Rad M."/>
            <person name="Rasmussen S.W."/>
            <person name="Rose M."/>
            <person name="Rossau R."/>
            <person name="Schaaff-Gerstenschlaeger I."/>
            <person name="Smits P.H.M."/>
            <person name="Scarcez T."/>
            <person name="Soriano N."/>
            <person name="To Van D."/>
            <person name="Tzermia M."/>
            <person name="Van Broekhoven A."/>
            <person name="Vandenbol M."/>
            <person name="Wedler H."/>
            <person name="von Wettstein D."/>
            <person name="Wambutt R."/>
            <person name="Zagulski M."/>
            <person name="Zollner A."/>
            <person name="Karpfinger-Hartl L."/>
        </authorList>
    </citation>
    <scope>NUCLEOTIDE SEQUENCE [LARGE SCALE GENOMIC DNA]</scope>
    <source>
        <strain>ATCC 204508 / S288c</strain>
    </source>
</reference>
<reference key="4">
    <citation type="journal article" date="2014" name="G3 (Bethesda)">
        <title>The reference genome sequence of Saccharomyces cerevisiae: Then and now.</title>
        <authorList>
            <person name="Engel S.R."/>
            <person name="Dietrich F.S."/>
            <person name="Fisk D.G."/>
            <person name="Binkley G."/>
            <person name="Balakrishnan R."/>
            <person name="Costanzo M.C."/>
            <person name="Dwight S.S."/>
            <person name="Hitz B.C."/>
            <person name="Karra K."/>
            <person name="Nash R.S."/>
            <person name="Weng S."/>
            <person name="Wong E.D."/>
            <person name="Lloyd P."/>
            <person name="Skrzypek M.S."/>
            <person name="Miyasato S.R."/>
            <person name="Simison M."/>
            <person name="Cherry J.M."/>
        </authorList>
    </citation>
    <scope>GENOME REANNOTATION</scope>
    <source>
        <strain>ATCC 204508 / S288c</strain>
    </source>
</reference>
<reference key="5">
    <citation type="journal article" date="1998" name="Eur. J. Biochem.">
        <title>Fatty acid elongation in yeast--biochemical characteristics of the enzyme system and isolation of elongation-defective mutants.</title>
        <authorList>
            <person name="Dittrich F."/>
            <person name="Zajonc D."/>
            <person name="Huhne K."/>
            <person name="Hoja U."/>
            <person name="Ekici A."/>
            <person name="Greiner E."/>
            <person name="Klein H."/>
            <person name="Hofmann J."/>
            <person name="Bessoule J.J."/>
            <person name="Sperling P."/>
            <person name="Schweizer E."/>
        </authorList>
    </citation>
    <scope>FUNCTION</scope>
    <scope>CATALYTIC ACTIVITY</scope>
    <scope>BIOPHYSICOCHEMICAL PROPERTIES</scope>
</reference>
<reference key="6">
    <citation type="journal article" date="2000" name="J. Bacteriol.">
        <title>Elo1p-dependent carboxy-terminal elongation of C14:1Delta(9) to C16:1Delta(11) fatty acids in Saccharomyces cerevisiae.</title>
        <authorList>
            <person name="Schneiter R."/>
            <person name="Tatzer V."/>
            <person name="Gogg G."/>
            <person name="Leitner E."/>
            <person name="Kohlwein S.D."/>
        </authorList>
    </citation>
    <scope>FUNCTION</scope>
    <scope>CATALYTIC ACTIVITY</scope>
</reference>
<reference key="7">
    <citation type="journal article" date="2003" name="Mol. Genet. Genomics">
        <title>Functional differentiation and selective inactivation of multiple Saccharomyces cerevisiae genes involved in very-long-chain fatty acid synthesis.</title>
        <authorList>
            <person name="Roessler H."/>
            <person name="Rieck C."/>
            <person name="Delong T."/>
            <person name="Hoja U."/>
            <person name="Schweizer E."/>
        </authorList>
    </citation>
    <scope>FUNCTION</scope>
</reference>
<reference key="8">
    <citation type="journal article" date="2003" name="Nature">
        <title>Global analysis of protein localization in budding yeast.</title>
        <authorList>
            <person name="Huh W.-K."/>
            <person name="Falvo J.V."/>
            <person name="Gerke L.C."/>
            <person name="Carroll A.S."/>
            <person name="Howson R.W."/>
            <person name="Weissman J.S."/>
            <person name="O'Shea E.K."/>
        </authorList>
    </citation>
    <scope>SUBCELLULAR LOCATION [LARGE SCALE ANALYSIS]</scope>
</reference>
<reference key="9">
    <citation type="journal article" date="2003" name="Nature">
        <title>Global analysis of protein expression in yeast.</title>
        <authorList>
            <person name="Ghaemmaghami S."/>
            <person name="Huh W.-K."/>
            <person name="Bower K."/>
            <person name="Howson R.W."/>
            <person name="Belle A."/>
            <person name="Dephoure N."/>
            <person name="O'Shea E.K."/>
            <person name="Weissman J.S."/>
        </authorList>
    </citation>
    <scope>LEVEL OF PROTEIN EXPRESSION [LARGE SCALE ANALYSIS]</scope>
</reference>
<reference key="10">
    <citation type="journal article" date="2006" name="Proc. Natl. Acad. Sci. U.S.A.">
        <title>A global topology map of the Saccharomyces cerevisiae membrane proteome.</title>
        <authorList>
            <person name="Kim H."/>
            <person name="Melen K."/>
            <person name="Oesterberg M."/>
            <person name="von Heijne G."/>
        </authorList>
    </citation>
    <scope>TOPOLOGY [LARGE SCALE ANALYSIS]</scope>
    <source>
        <strain>ATCC 208353 / W303-1A</strain>
    </source>
</reference>
<proteinExistence type="evidence at protein level"/>
<organism>
    <name type="scientific">Saccharomyces cerevisiae (strain ATCC 204508 / S288c)</name>
    <name type="common">Baker's yeast</name>
    <dbReference type="NCBI Taxonomy" id="559292"/>
    <lineage>
        <taxon>Eukaryota</taxon>
        <taxon>Fungi</taxon>
        <taxon>Dikarya</taxon>
        <taxon>Ascomycota</taxon>
        <taxon>Saccharomycotina</taxon>
        <taxon>Saccharomycetes</taxon>
        <taxon>Saccharomycetales</taxon>
        <taxon>Saccharomycetaceae</taxon>
        <taxon>Saccharomyces</taxon>
    </lineage>
</organism>
<feature type="chain" id="PRO_0000207548" description="Fatty acid elongase 1">
    <location>
        <begin position="1"/>
        <end position="310"/>
    </location>
</feature>
<feature type="topological domain" description="Lumenal" evidence="12">
    <location>
        <begin position="1"/>
        <end position="63"/>
    </location>
</feature>
<feature type="transmembrane region" description="Helical; Name=1" evidence="2">
    <location>
        <begin position="64"/>
        <end position="84"/>
    </location>
</feature>
<feature type="topological domain" description="Cytoplasmic" evidence="12">
    <location>
        <begin position="85"/>
        <end position="100"/>
    </location>
</feature>
<feature type="transmembrane region" description="Helical; Name=2" evidence="2">
    <location>
        <begin position="101"/>
        <end position="121"/>
    </location>
</feature>
<feature type="topological domain" description="Lumenal" evidence="12">
    <location>
        <begin position="122"/>
        <end position="141"/>
    </location>
</feature>
<feature type="transmembrane region" description="Helical; Name=3" evidence="2">
    <location>
        <begin position="142"/>
        <end position="163"/>
    </location>
</feature>
<feature type="topological domain" description="Cytoplasmic" evidence="12">
    <location>
        <begin position="164"/>
        <end position="174"/>
    </location>
</feature>
<feature type="transmembrane region" description="Helical; Name=4" evidence="2">
    <location>
        <begin position="175"/>
        <end position="196"/>
    </location>
</feature>
<feature type="topological domain" description="Lumenal" evidence="12">
    <location>
        <begin position="197"/>
        <end position="201"/>
    </location>
</feature>
<feature type="transmembrane region" description="Helical; Name=5" evidence="2">
    <location>
        <begin position="202"/>
        <end position="223"/>
    </location>
</feature>
<feature type="topological domain" description="Cytoplasmic" evidence="12">
    <location>
        <begin position="224"/>
        <end position="234"/>
    </location>
</feature>
<feature type="transmembrane region" description="Helical; Name=6" evidence="2">
    <location>
        <begin position="235"/>
        <end position="255"/>
    </location>
</feature>
<feature type="topological domain" description="Lumenal" evidence="12">
    <location>
        <begin position="256"/>
        <end position="271"/>
    </location>
</feature>
<feature type="transmembrane region" description="Helical; Name=7" evidence="2">
    <location>
        <begin position="272"/>
        <end position="292"/>
    </location>
</feature>
<feature type="topological domain" description="Cytoplasmic" evidence="7">
    <location>
        <begin position="293"/>
        <end position="310"/>
    </location>
</feature>
<feature type="short sequence motif" description="HxxHH motif" evidence="1">
    <location>
        <begin position="172"/>
        <end position="176"/>
    </location>
</feature>
<feature type="short sequence motif" description="Di-lysine motif" evidence="10">
    <location>
        <begin position="304"/>
        <end position="307"/>
    </location>
</feature>
<gene>
    <name evidence="10" type="primary">ELO1</name>
    <name evidence="13" type="ordered locus">YJL196C</name>
    <name type="ORF">J0343</name>
</gene>
<comment type="function">
    <text evidence="3 4 8 9">Component of a microsomal membrane bound medium-chain fatty acid elongation system, which extends medium-chain-length fatty acids to long-chain fatty acids. Component of elongase I, which extends 12-16-carbon fatty acyl-CoAs such as lauroyl-CoA to 14-18-carbon fatty acids by incorporation of malonyl-CoA.</text>
</comment>
<comment type="catalytic activity">
    <reaction evidence="9">
        <text>a very-long-chain acyl-CoA + malonyl-CoA + H(+) = a very-long-chain 3-oxoacyl-CoA + CO2 + CoA</text>
        <dbReference type="Rhea" id="RHEA:32727"/>
        <dbReference type="ChEBI" id="CHEBI:15378"/>
        <dbReference type="ChEBI" id="CHEBI:16526"/>
        <dbReference type="ChEBI" id="CHEBI:57287"/>
        <dbReference type="ChEBI" id="CHEBI:57384"/>
        <dbReference type="ChEBI" id="CHEBI:90725"/>
        <dbReference type="ChEBI" id="CHEBI:90736"/>
        <dbReference type="EC" id="2.3.1.199"/>
    </reaction>
</comment>
<comment type="catalytic activity">
    <reaction evidence="8">
        <text>tetradecanoyl-CoA + malonyl-CoA + H(+) = 3-oxohexadecanoyl-CoA + CO2 + CoA</text>
        <dbReference type="Rhea" id="RHEA:39167"/>
        <dbReference type="ChEBI" id="CHEBI:15378"/>
        <dbReference type="ChEBI" id="CHEBI:16526"/>
        <dbReference type="ChEBI" id="CHEBI:57287"/>
        <dbReference type="ChEBI" id="CHEBI:57349"/>
        <dbReference type="ChEBI" id="CHEBI:57384"/>
        <dbReference type="ChEBI" id="CHEBI:57385"/>
    </reaction>
    <physiologicalReaction direction="left-to-right" evidence="8">
        <dbReference type="Rhea" id="RHEA:39168"/>
    </physiologicalReaction>
</comment>
<comment type="catalytic activity">
    <reaction evidence="3">
        <text>(9Z)-tetradecenoyl-CoA + malonyl-CoA + H(+) = 3-oxo-(11Z)-hexadecenoyl-CoA + CO2 + CoA</text>
        <dbReference type="Rhea" id="RHEA:42356"/>
        <dbReference type="ChEBI" id="CHEBI:15378"/>
        <dbReference type="ChEBI" id="CHEBI:16526"/>
        <dbReference type="ChEBI" id="CHEBI:57287"/>
        <dbReference type="ChEBI" id="CHEBI:57384"/>
        <dbReference type="ChEBI" id="CHEBI:65060"/>
        <dbReference type="ChEBI" id="CHEBI:79021"/>
    </reaction>
    <physiologicalReaction direction="left-to-right" evidence="3">
        <dbReference type="Rhea" id="RHEA:42357"/>
    </physiologicalReaction>
</comment>
<comment type="biophysicochemical properties">
    <kinetics>
        <KM evidence="9">0.33 mM for octanoyl-CoA</KM>
        <KM evidence="9">0.83 mM for decanoyl-CoA</KM>
        <KM evidence="9">0.05 mM for lauroyl-CoA</KM>
        <KM evidence="9">0.4 mM for myristoyl-CoA</KM>
        <KM evidence="9">0.13 mM for palmitoyl-CoA</KM>
    </kinetics>
</comment>
<comment type="subcellular location">
    <subcellularLocation>
        <location evidence="5">Endoplasmic reticulum membrane</location>
        <topology evidence="2">Multi-pass membrane protein</topology>
    </subcellularLocation>
</comment>
<comment type="induction">
    <text>Induced in wild-type cells supplemented with 14:0 fatty acids and repressed when cells are supplied with 16- and 18-carbon fatty acids.</text>
</comment>
<comment type="domain">
    <text evidence="10">The C-terminal di-lysine motif may confer endoplasmic reticulum localization.</text>
</comment>
<comment type="domain">
    <text evidence="1">The HxxHH motif is essential for ELOp function in vivo and 3-keto acyl-CoA synthase activity in vitro.</text>
</comment>
<comment type="miscellaneous">
    <text evidence="6">Present with 937 molecules/cell in log phase SD medium.</text>
</comment>
<comment type="similarity">
    <text evidence="11">Belongs to the ELO family.</text>
</comment>
<accession>P39540</accession>
<accession>D6VVZ6</accession>
<protein>
    <recommendedName>
        <fullName evidence="11">Fatty acid elongase 1</fullName>
        <ecNumber evidence="9">2.3.1.199</ecNumber>
    </recommendedName>
    <alternativeName>
        <fullName evidence="11">3-keto acyl-CoA synthase ELO1</fullName>
    </alternativeName>
    <alternativeName>
        <fullName evidence="10">Elongation of fatty acids protein 1</fullName>
    </alternativeName>
    <alternativeName>
        <fullName evidence="11">Very-long-chain 3-oxoacyl-CoA synthase 1</fullName>
    </alternativeName>
</protein>
<dbReference type="EC" id="2.3.1.199" evidence="9"/>
<dbReference type="EMBL" id="X77688">
    <property type="protein sequence ID" value="CAA54764.1"/>
    <property type="molecule type" value="Genomic_DNA"/>
</dbReference>
<dbReference type="EMBL" id="Z49471">
    <property type="protein sequence ID" value="CAA89491.1"/>
    <property type="molecule type" value="Genomic_DNA"/>
</dbReference>
<dbReference type="EMBL" id="BK006943">
    <property type="protein sequence ID" value="DAA08612.1"/>
    <property type="molecule type" value="Genomic_DNA"/>
</dbReference>
<dbReference type="PIR" id="S46638">
    <property type="entry name" value="S46638"/>
</dbReference>
<dbReference type="RefSeq" id="NP_012339.1">
    <property type="nucleotide sequence ID" value="NM_001181629.1"/>
</dbReference>
<dbReference type="SMR" id="P39540"/>
<dbReference type="BioGRID" id="33568">
    <property type="interactions" value="110"/>
</dbReference>
<dbReference type="DIP" id="DIP-8755N"/>
<dbReference type="FunCoup" id="P39540">
    <property type="interactions" value="609"/>
</dbReference>
<dbReference type="IntAct" id="P39540">
    <property type="interactions" value="8"/>
</dbReference>
<dbReference type="MINT" id="P39540"/>
<dbReference type="STRING" id="4932.YJL196C"/>
<dbReference type="SwissLipids" id="SLP:000000576"/>
<dbReference type="SwissLipids" id="SLP:000000876"/>
<dbReference type="iPTMnet" id="P39540"/>
<dbReference type="PaxDb" id="4932-YJL196C"/>
<dbReference type="PeptideAtlas" id="P39540"/>
<dbReference type="EnsemblFungi" id="YJL196C_mRNA">
    <property type="protein sequence ID" value="YJL196C"/>
    <property type="gene ID" value="YJL196C"/>
</dbReference>
<dbReference type="GeneID" id="853243"/>
<dbReference type="KEGG" id="sce:YJL196C"/>
<dbReference type="AGR" id="SGD:S000003732"/>
<dbReference type="SGD" id="S000003732">
    <property type="gene designation" value="ELO1"/>
</dbReference>
<dbReference type="VEuPathDB" id="FungiDB:YJL196C"/>
<dbReference type="eggNOG" id="KOG3071">
    <property type="taxonomic scope" value="Eukaryota"/>
</dbReference>
<dbReference type="GeneTree" id="ENSGT01050000244965"/>
<dbReference type="HOGENOM" id="CLU_048483_6_1_1"/>
<dbReference type="InParanoid" id="P39540"/>
<dbReference type="OMA" id="WLGTMFM"/>
<dbReference type="OrthoDB" id="434092at2759"/>
<dbReference type="BioCyc" id="YEAST:G3O-31627-MONOMER"/>
<dbReference type="Reactome" id="R-SCE-2046105">
    <property type="pathway name" value="Linoleic acid (LA) metabolism"/>
</dbReference>
<dbReference type="Reactome" id="R-SCE-2046106">
    <property type="pathway name" value="alpha-linolenic acid (ALA) metabolism"/>
</dbReference>
<dbReference type="Reactome" id="R-SCE-75876">
    <property type="pathway name" value="Synthesis of very long-chain fatty acyl-CoAs"/>
</dbReference>
<dbReference type="SABIO-RK" id="P39540"/>
<dbReference type="BioGRID-ORCS" id="853243">
    <property type="hits" value="2 hits in 10 CRISPR screens"/>
</dbReference>
<dbReference type="PRO" id="PR:P39540"/>
<dbReference type="Proteomes" id="UP000002311">
    <property type="component" value="Chromosome X"/>
</dbReference>
<dbReference type="RNAct" id="P39540">
    <property type="molecule type" value="protein"/>
</dbReference>
<dbReference type="GO" id="GO:0005783">
    <property type="term" value="C:endoplasmic reticulum"/>
    <property type="evidence" value="ECO:0007005"/>
    <property type="project" value="SGD"/>
</dbReference>
<dbReference type="GO" id="GO:0005789">
    <property type="term" value="C:endoplasmic reticulum membrane"/>
    <property type="evidence" value="ECO:0000318"/>
    <property type="project" value="GO_Central"/>
</dbReference>
<dbReference type="GO" id="GO:0009922">
    <property type="term" value="F:fatty acid elongase activity"/>
    <property type="evidence" value="ECO:0000315"/>
    <property type="project" value="SGD"/>
</dbReference>
<dbReference type="GO" id="GO:0034625">
    <property type="term" value="P:fatty acid elongation, monounsaturated fatty acid"/>
    <property type="evidence" value="ECO:0000318"/>
    <property type="project" value="GO_Central"/>
</dbReference>
<dbReference type="GO" id="GO:0034626">
    <property type="term" value="P:fatty acid elongation, polyunsaturated fatty acid"/>
    <property type="evidence" value="ECO:0000318"/>
    <property type="project" value="GO_Central"/>
</dbReference>
<dbReference type="GO" id="GO:0019367">
    <property type="term" value="P:fatty acid elongation, saturated fatty acid"/>
    <property type="evidence" value="ECO:0000318"/>
    <property type="project" value="GO_Central"/>
</dbReference>
<dbReference type="GO" id="GO:0019368">
    <property type="term" value="P:fatty acid elongation, unsaturated fatty acid"/>
    <property type="evidence" value="ECO:0000315"/>
    <property type="project" value="SGD"/>
</dbReference>
<dbReference type="GO" id="GO:0030148">
    <property type="term" value="P:sphingolipid biosynthetic process"/>
    <property type="evidence" value="ECO:0000318"/>
    <property type="project" value="GO_Central"/>
</dbReference>
<dbReference type="GO" id="GO:0042761">
    <property type="term" value="P:very long-chain fatty acid biosynthetic process"/>
    <property type="evidence" value="ECO:0000318"/>
    <property type="project" value="GO_Central"/>
</dbReference>
<dbReference type="InterPro" id="IPR030457">
    <property type="entry name" value="ELO_CS"/>
</dbReference>
<dbReference type="InterPro" id="IPR002076">
    <property type="entry name" value="ELO_fam"/>
</dbReference>
<dbReference type="PANTHER" id="PTHR11157:SF134">
    <property type="entry name" value="ELONGATION OF FATTY ACIDS PROTEIN 1-RELATED"/>
    <property type="match status" value="1"/>
</dbReference>
<dbReference type="PANTHER" id="PTHR11157">
    <property type="entry name" value="FATTY ACID ACYL TRANSFERASE-RELATED"/>
    <property type="match status" value="1"/>
</dbReference>
<dbReference type="Pfam" id="PF01151">
    <property type="entry name" value="ELO"/>
    <property type="match status" value="1"/>
</dbReference>
<dbReference type="PROSITE" id="PS01188">
    <property type="entry name" value="ELO"/>
    <property type="match status" value="1"/>
</dbReference>